<sequence length="230" mass="25448">MWAWALLPICLTIWATAGIWIVYGMSVSNGSVNLTDGFPFISLCGTYPPQSCVFGQVLNVGAMLGVWISVIRFQQIRDYGCHSVLNSVSLAMGLLCALGTSIVGNFQQSNQLETHLAGAFLAFVIGNIYFWMQTVLTYMVKPKHGGCYIGPIRFCLSVACTALIVLMAVFLKLNMKSISAICEWIVAMILFLLYGLFSVDFWHLDGHYFHVKKRTAIPNEVEVSTVTLNI</sequence>
<feature type="chain" id="PRO_0000349289" description="Modulator of macroautophagy TMEM150B">
    <location>
        <begin position="1"/>
        <end position="230"/>
    </location>
</feature>
<feature type="topological domain" description="Cytoplasmic" evidence="4">
    <location>
        <position position="1"/>
    </location>
</feature>
<feature type="transmembrane region" description="Helical" evidence="3">
    <location>
        <begin position="2"/>
        <end position="22"/>
    </location>
</feature>
<feature type="topological domain" description="Extracellular" evidence="4">
    <location>
        <begin position="23"/>
        <end position="50"/>
    </location>
</feature>
<feature type="transmembrane region" description="Helical" evidence="3">
    <location>
        <begin position="51"/>
        <end position="71"/>
    </location>
</feature>
<feature type="topological domain" description="Cytoplasmic" evidence="4">
    <location>
        <begin position="72"/>
        <end position="83"/>
    </location>
</feature>
<feature type="transmembrane region" description="Helical" evidence="3">
    <location>
        <begin position="84"/>
        <end position="104"/>
    </location>
</feature>
<feature type="topological domain" description="Extracellular" evidence="4">
    <location>
        <begin position="105"/>
        <end position="115"/>
    </location>
</feature>
<feature type="transmembrane region" description="Helical" evidence="3">
    <location>
        <begin position="116"/>
        <end position="136"/>
    </location>
</feature>
<feature type="topological domain" description="Cytoplasmic" evidence="4">
    <location>
        <begin position="137"/>
        <end position="150"/>
    </location>
</feature>
<feature type="transmembrane region" description="Helical" evidence="3">
    <location>
        <begin position="151"/>
        <end position="171"/>
    </location>
</feature>
<feature type="topological domain" description="Extracellular" evidence="4">
    <location>
        <begin position="172"/>
        <end position="183"/>
    </location>
</feature>
<feature type="transmembrane region" description="Helical" evidence="3">
    <location>
        <begin position="184"/>
        <end position="204"/>
    </location>
</feature>
<feature type="topological domain" description="Cytoplasmic" evidence="2">
    <location>
        <begin position="205"/>
        <end position="230"/>
    </location>
</feature>
<feature type="glycosylation site" description="N-linked (GlcNAc...) asparagine" evidence="3">
    <location>
        <position position="29"/>
    </location>
</feature>
<feature type="glycosylation site" description="N-linked (GlcNAc...) asparagine" evidence="3">
    <location>
        <position position="33"/>
    </location>
</feature>
<dbReference type="EMBL" id="BC155023">
    <property type="protein sequence ID" value="AAI55024.1"/>
    <property type="molecule type" value="mRNA"/>
</dbReference>
<dbReference type="RefSeq" id="NP_001015997.1">
    <property type="nucleotide sequence ID" value="NM_001015997.2"/>
</dbReference>
<dbReference type="RefSeq" id="XP_012822011.1">
    <property type="nucleotide sequence ID" value="XM_012966557.3"/>
</dbReference>
<dbReference type="FunCoup" id="A9JSP6">
    <property type="interactions" value="354"/>
</dbReference>
<dbReference type="GlyCosmos" id="A9JSP6">
    <property type="glycosylation" value="2 sites, No reported glycans"/>
</dbReference>
<dbReference type="PaxDb" id="8364-ENSXETP00000054331"/>
<dbReference type="GeneID" id="548751"/>
<dbReference type="KEGG" id="xtr:548751"/>
<dbReference type="AGR" id="Xenbase:XB-GENE-5873606"/>
<dbReference type="CTD" id="284417"/>
<dbReference type="Xenbase" id="XB-GENE-5873606">
    <property type="gene designation" value="tmem150b"/>
</dbReference>
<dbReference type="eggNOG" id="KOG4320">
    <property type="taxonomic scope" value="Eukaryota"/>
</dbReference>
<dbReference type="InParanoid" id="A9JSP6"/>
<dbReference type="OMA" id="IRYHQLR"/>
<dbReference type="OrthoDB" id="191706at2759"/>
<dbReference type="Proteomes" id="UP000008143">
    <property type="component" value="Chromosome 7"/>
</dbReference>
<dbReference type="Bgee" id="ENSXETG00000025504">
    <property type="expression patterns" value="Expressed in gastrula and 2 other cell types or tissues"/>
</dbReference>
<dbReference type="GO" id="GO:0000421">
    <property type="term" value="C:autophagosome membrane"/>
    <property type="evidence" value="ECO:0007669"/>
    <property type="project" value="UniProtKB-SubCell"/>
</dbReference>
<dbReference type="GO" id="GO:0010008">
    <property type="term" value="C:endosome membrane"/>
    <property type="evidence" value="ECO:0007669"/>
    <property type="project" value="UniProtKB-SubCell"/>
</dbReference>
<dbReference type="GO" id="GO:0005886">
    <property type="term" value="C:plasma membrane"/>
    <property type="evidence" value="ECO:0000250"/>
    <property type="project" value="UniProtKB"/>
</dbReference>
<dbReference type="GO" id="GO:0006914">
    <property type="term" value="P:autophagy"/>
    <property type="evidence" value="ECO:0007669"/>
    <property type="project" value="UniProtKB-KW"/>
</dbReference>
<dbReference type="InterPro" id="IPR050911">
    <property type="entry name" value="DRAM/TMEM150_Autophagy_Mod"/>
</dbReference>
<dbReference type="InterPro" id="IPR019402">
    <property type="entry name" value="Frag1/DRAM/Sfk1"/>
</dbReference>
<dbReference type="PANTHER" id="PTHR21324">
    <property type="entry name" value="FASTING-INDUCIBLE INTEGRAL MEMBRANE PROTEIN TM6P1-RELATED"/>
    <property type="match status" value="1"/>
</dbReference>
<dbReference type="PANTHER" id="PTHR21324:SF3">
    <property type="entry name" value="MODULATOR OF MACROAUTOPHAGY TMEM150B"/>
    <property type="match status" value="1"/>
</dbReference>
<dbReference type="Pfam" id="PF10277">
    <property type="entry name" value="Frag1"/>
    <property type="match status" value="1"/>
</dbReference>
<accession>A9JSP6</accession>
<protein>
    <recommendedName>
        <fullName evidence="4">Modulator of macroautophagy TMEM150B</fullName>
    </recommendedName>
    <alternativeName>
        <fullName evidence="1">Transmembrane protein 150B</fullName>
    </alternativeName>
</protein>
<keyword id="KW-0072">Autophagy</keyword>
<keyword id="KW-1003">Cell membrane</keyword>
<keyword id="KW-0968">Cytoplasmic vesicle</keyword>
<keyword id="KW-0967">Endosome</keyword>
<keyword id="KW-0325">Glycoprotein</keyword>
<keyword id="KW-0472">Membrane</keyword>
<keyword id="KW-1185">Reference proteome</keyword>
<keyword id="KW-0812">Transmembrane</keyword>
<keyword id="KW-1133">Transmembrane helix</keyword>
<gene>
    <name evidence="1" type="primary">tmem150b</name>
</gene>
<name>T150B_XENTR</name>
<organism>
    <name type="scientific">Xenopus tropicalis</name>
    <name type="common">Western clawed frog</name>
    <name type="synonym">Silurana tropicalis</name>
    <dbReference type="NCBI Taxonomy" id="8364"/>
    <lineage>
        <taxon>Eukaryota</taxon>
        <taxon>Metazoa</taxon>
        <taxon>Chordata</taxon>
        <taxon>Craniata</taxon>
        <taxon>Vertebrata</taxon>
        <taxon>Euteleostomi</taxon>
        <taxon>Amphibia</taxon>
        <taxon>Batrachia</taxon>
        <taxon>Anura</taxon>
        <taxon>Pipoidea</taxon>
        <taxon>Pipidae</taxon>
        <taxon>Xenopodinae</taxon>
        <taxon>Xenopus</taxon>
        <taxon>Silurana</taxon>
    </lineage>
</organism>
<comment type="function">
    <text evidence="1">Modulator of macroautophagy that causes accumulation of autophagosomes under basal conditions and enhances autophagic flux (By similarity). Represses cell death and promotes long-term clonogenic survival of cells grown in the absence of glucose in a macroautophagy-independent manner (By similarity). May have some role in extracellular matrix engulfment or growth factor receptor recycling, both of which can modulate cell survival (By similarity).</text>
</comment>
<comment type="subcellular location">
    <subcellularLocation>
        <location evidence="1">Cell membrane</location>
        <topology evidence="1">Multi-pass membrane protein</topology>
    </subcellularLocation>
    <subcellularLocation>
        <location evidence="1">Endosome membrane</location>
        <topology evidence="3">Multi-pass membrane protein</topology>
    </subcellularLocation>
    <subcellularLocation>
        <location evidence="1">Cytoplasmic vesicle</location>
        <location evidence="1">Autophagosome membrane</location>
        <topology evidence="3">Multi-pass membrane protein</topology>
    </subcellularLocation>
</comment>
<comment type="similarity">
    <text evidence="4">Belongs to the DRAM/TMEM150 family.</text>
</comment>
<proteinExistence type="evidence at transcript level"/>
<reference key="1">
    <citation type="submission" date="2007-11" db="EMBL/GenBank/DDBJ databases">
        <authorList>
            <consortium name="NIH - Xenopus Gene Collection (XGC) project"/>
        </authorList>
    </citation>
    <scope>NUCLEOTIDE SEQUENCE [LARGE SCALE MRNA]</scope>
    <source>
        <tissue>Embryo</tissue>
    </source>
</reference>
<evidence type="ECO:0000250" key="1">
    <source>
        <dbReference type="UniProtKB" id="A6NC51"/>
    </source>
</evidence>
<evidence type="ECO:0000250" key="2">
    <source>
        <dbReference type="UniProtKB" id="Q86TG1"/>
    </source>
</evidence>
<evidence type="ECO:0000255" key="3"/>
<evidence type="ECO:0000305" key="4"/>